<gene>
    <name evidence="1" type="primary">atpC</name>
    <name type="ordered locus">Psyr_5120</name>
</gene>
<comment type="function">
    <text evidence="1">Produces ATP from ADP in the presence of a proton gradient across the membrane.</text>
</comment>
<comment type="subunit">
    <text>F-type ATPases have 2 components, CF(1) - the catalytic core - and CF(0) - the membrane proton channel. CF(1) has five subunits: alpha(3), beta(3), gamma(1), delta(1), epsilon(1). CF(0) has three main subunits: a, b and c.</text>
</comment>
<comment type="subcellular location">
    <subcellularLocation>
        <location evidence="1">Cell inner membrane</location>
        <topology evidence="1">Peripheral membrane protein</topology>
    </subcellularLocation>
</comment>
<comment type="similarity">
    <text evidence="1">Belongs to the ATPase epsilon chain family.</text>
</comment>
<sequence>MAMTVHCDIVSAEGEIFSGLVEMVIAHGNLGDIGIAPGHAPLITDLKPGPIRLIKQGGEAEVFYISGGFLEVQPNMVKVLADTVQRAADLDEASAQAAVLAAEKALNEKGADFDYGSATARLAEAAAQLRTVQQIRKKFGG</sequence>
<organism>
    <name type="scientific">Pseudomonas syringae pv. syringae (strain B728a)</name>
    <dbReference type="NCBI Taxonomy" id="205918"/>
    <lineage>
        <taxon>Bacteria</taxon>
        <taxon>Pseudomonadati</taxon>
        <taxon>Pseudomonadota</taxon>
        <taxon>Gammaproteobacteria</taxon>
        <taxon>Pseudomonadales</taxon>
        <taxon>Pseudomonadaceae</taxon>
        <taxon>Pseudomonas</taxon>
        <taxon>Pseudomonas syringae</taxon>
    </lineage>
</organism>
<protein>
    <recommendedName>
        <fullName evidence="1">ATP synthase epsilon chain</fullName>
    </recommendedName>
    <alternativeName>
        <fullName evidence="1">ATP synthase F1 sector epsilon subunit</fullName>
    </alternativeName>
    <alternativeName>
        <fullName evidence="1">F-ATPase epsilon subunit</fullName>
    </alternativeName>
</protein>
<feature type="chain" id="PRO_0000265865" description="ATP synthase epsilon chain">
    <location>
        <begin position="1"/>
        <end position="141"/>
    </location>
</feature>
<proteinExistence type="inferred from homology"/>
<dbReference type="EMBL" id="CP000075">
    <property type="protein sequence ID" value="AAY40147.1"/>
    <property type="molecule type" value="Genomic_DNA"/>
</dbReference>
<dbReference type="RefSeq" id="WP_003413751.1">
    <property type="nucleotide sequence ID" value="NC_007005.1"/>
</dbReference>
<dbReference type="RefSeq" id="YP_238185.1">
    <property type="nucleotide sequence ID" value="NC_007005.1"/>
</dbReference>
<dbReference type="SMR" id="Q4ZL25"/>
<dbReference type="STRING" id="205918.Psyr_5120"/>
<dbReference type="KEGG" id="psb:Psyr_5120"/>
<dbReference type="PATRIC" id="fig|205918.7.peg.5281"/>
<dbReference type="eggNOG" id="COG0355">
    <property type="taxonomic scope" value="Bacteria"/>
</dbReference>
<dbReference type="HOGENOM" id="CLU_084338_2_0_6"/>
<dbReference type="OrthoDB" id="9791445at2"/>
<dbReference type="Proteomes" id="UP000000426">
    <property type="component" value="Chromosome"/>
</dbReference>
<dbReference type="GO" id="GO:0005886">
    <property type="term" value="C:plasma membrane"/>
    <property type="evidence" value="ECO:0007669"/>
    <property type="project" value="UniProtKB-SubCell"/>
</dbReference>
<dbReference type="GO" id="GO:0045259">
    <property type="term" value="C:proton-transporting ATP synthase complex"/>
    <property type="evidence" value="ECO:0007669"/>
    <property type="project" value="UniProtKB-KW"/>
</dbReference>
<dbReference type="GO" id="GO:0005524">
    <property type="term" value="F:ATP binding"/>
    <property type="evidence" value="ECO:0007669"/>
    <property type="project" value="UniProtKB-UniRule"/>
</dbReference>
<dbReference type="GO" id="GO:0046933">
    <property type="term" value="F:proton-transporting ATP synthase activity, rotational mechanism"/>
    <property type="evidence" value="ECO:0007669"/>
    <property type="project" value="UniProtKB-UniRule"/>
</dbReference>
<dbReference type="CDD" id="cd12152">
    <property type="entry name" value="F1-ATPase_delta"/>
    <property type="match status" value="1"/>
</dbReference>
<dbReference type="FunFam" id="2.60.15.10:FF:000001">
    <property type="entry name" value="ATP synthase epsilon chain"/>
    <property type="match status" value="1"/>
</dbReference>
<dbReference type="Gene3D" id="1.20.5.440">
    <property type="entry name" value="ATP synthase delta/epsilon subunit, C-terminal domain"/>
    <property type="match status" value="1"/>
</dbReference>
<dbReference type="Gene3D" id="2.60.15.10">
    <property type="entry name" value="F0F1 ATP synthase delta/epsilon subunit, N-terminal"/>
    <property type="match status" value="1"/>
</dbReference>
<dbReference type="HAMAP" id="MF_00530">
    <property type="entry name" value="ATP_synth_epsil_bac"/>
    <property type="match status" value="1"/>
</dbReference>
<dbReference type="InterPro" id="IPR036794">
    <property type="entry name" value="ATP_F1_dsu/esu_C_sf"/>
</dbReference>
<dbReference type="InterPro" id="IPR001469">
    <property type="entry name" value="ATP_synth_F1_dsu/esu"/>
</dbReference>
<dbReference type="InterPro" id="IPR020546">
    <property type="entry name" value="ATP_synth_F1_dsu/esu_N"/>
</dbReference>
<dbReference type="InterPro" id="IPR020547">
    <property type="entry name" value="ATP_synth_F1_esu_C"/>
</dbReference>
<dbReference type="InterPro" id="IPR036771">
    <property type="entry name" value="ATPsynth_dsu/esu_N"/>
</dbReference>
<dbReference type="NCBIfam" id="TIGR01216">
    <property type="entry name" value="ATP_synt_epsi"/>
    <property type="match status" value="1"/>
</dbReference>
<dbReference type="NCBIfam" id="NF001847">
    <property type="entry name" value="PRK00571.1-4"/>
    <property type="match status" value="1"/>
</dbReference>
<dbReference type="PANTHER" id="PTHR13822">
    <property type="entry name" value="ATP SYNTHASE DELTA/EPSILON CHAIN"/>
    <property type="match status" value="1"/>
</dbReference>
<dbReference type="PANTHER" id="PTHR13822:SF10">
    <property type="entry name" value="ATP SYNTHASE EPSILON CHAIN, CHLOROPLASTIC"/>
    <property type="match status" value="1"/>
</dbReference>
<dbReference type="Pfam" id="PF00401">
    <property type="entry name" value="ATP-synt_DE"/>
    <property type="match status" value="1"/>
</dbReference>
<dbReference type="Pfam" id="PF02823">
    <property type="entry name" value="ATP-synt_DE_N"/>
    <property type="match status" value="1"/>
</dbReference>
<dbReference type="SUPFAM" id="SSF46604">
    <property type="entry name" value="Epsilon subunit of F1F0-ATP synthase C-terminal domain"/>
    <property type="match status" value="1"/>
</dbReference>
<dbReference type="SUPFAM" id="SSF51344">
    <property type="entry name" value="Epsilon subunit of F1F0-ATP synthase N-terminal domain"/>
    <property type="match status" value="1"/>
</dbReference>
<accession>Q4ZL25</accession>
<reference key="1">
    <citation type="journal article" date="2005" name="Proc. Natl. Acad. Sci. U.S.A.">
        <title>Comparison of the complete genome sequences of Pseudomonas syringae pv. syringae B728a and pv. tomato DC3000.</title>
        <authorList>
            <person name="Feil H."/>
            <person name="Feil W.S."/>
            <person name="Chain P."/>
            <person name="Larimer F."/>
            <person name="Dibartolo G."/>
            <person name="Copeland A."/>
            <person name="Lykidis A."/>
            <person name="Trong S."/>
            <person name="Nolan M."/>
            <person name="Goltsman E."/>
            <person name="Thiel J."/>
            <person name="Malfatti S."/>
            <person name="Loper J.E."/>
            <person name="Lapidus A."/>
            <person name="Detter J.C."/>
            <person name="Land M."/>
            <person name="Richardson P.M."/>
            <person name="Kyrpides N.C."/>
            <person name="Ivanova N."/>
            <person name="Lindow S.E."/>
        </authorList>
    </citation>
    <scope>NUCLEOTIDE SEQUENCE [LARGE SCALE GENOMIC DNA]</scope>
    <source>
        <strain>B728a</strain>
    </source>
</reference>
<keyword id="KW-0066">ATP synthesis</keyword>
<keyword id="KW-0997">Cell inner membrane</keyword>
<keyword id="KW-1003">Cell membrane</keyword>
<keyword id="KW-0139">CF(1)</keyword>
<keyword id="KW-0375">Hydrogen ion transport</keyword>
<keyword id="KW-0406">Ion transport</keyword>
<keyword id="KW-0472">Membrane</keyword>
<keyword id="KW-0813">Transport</keyword>
<evidence type="ECO:0000255" key="1">
    <source>
        <dbReference type="HAMAP-Rule" id="MF_00530"/>
    </source>
</evidence>
<name>ATPE_PSEU2</name>